<protein>
    <recommendedName>
        <fullName evidence="1">Deoxyguanosinetriphosphate triphosphohydrolase-like protein</fullName>
    </recommendedName>
</protein>
<accession>B0T1R2</accession>
<gene>
    <name type="ordered locus">Caul_3124</name>
</gene>
<organism>
    <name type="scientific">Caulobacter sp. (strain K31)</name>
    <dbReference type="NCBI Taxonomy" id="366602"/>
    <lineage>
        <taxon>Bacteria</taxon>
        <taxon>Pseudomonadati</taxon>
        <taxon>Pseudomonadota</taxon>
        <taxon>Alphaproteobacteria</taxon>
        <taxon>Caulobacterales</taxon>
        <taxon>Caulobacteraceae</taxon>
        <taxon>Caulobacter</taxon>
    </lineage>
</organism>
<comment type="similarity">
    <text evidence="1">Belongs to the dGTPase family. Type 2 subfamily.</text>
</comment>
<sequence>MSSSPFFVPRAPYAEDPAKSRGRRFPEDESRTRTPFARDRDRIIHTSAFRRLKEKTQVFVAHEGDNFRTRLTHSLEVAQVARSLATALGLDSDLAETIALGHDIGHPPFGHAGEDELQACMKAFGGFDHNVQTFRVVTELERRYPDFDGLNLTWETLEGIIKHNGPVTEKLGKPSWKAISKYDAEYKLGLNTWASAEAQVAALADDIAYNNHDVDDGVEAGLFTLDELMDVPLIGPILAAVRSERPDLDLRLTRLEAVRRMIGAMVDDVMGETLKRAAATGVQSAEDVRNLDHALVAFSADMAEDLARLRQFLHTRMYRHWKVNRTRSQARRILAEMFGLFLAEPDVLPSEWFARSQNRDEAGRARVVCDYIAGMTDRFAIEEHRKLFQLDVWN</sequence>
<evidence type="ECO:0000255" key="1">
    <source>
        <dbReference type="HAMAP-Rule" id="MF_01212"/>
    </source>
</evidence>
<evidence type="ECO:0000255" key="2">
    <source>
        <dbReference type="PROSITE-ProRule" id="PRU01175"/>
    </source>
</evidence>
<evidence type="ECO:0000256" key="3">
    <source>
        <dbReference type="SAM" id="MobiDB-lite"/>
    </source>
</evidence>
<feature type="chain" id="PRO_1000164732" description="Deoxyguanosinetriphosphate triphosphohydrolase-like protein">
    <location>
        <begin position="1"/>
        <end position="394"/>
    </location>
</feature>
<feature type="domain" description="HD" evidence="2">
    <location>
        <begin position="70"/>
        <end position="210"/>
    </location>
</feature>
<feature type="region of interest" description="Disordered" evidence="3">
    <location>
        <begin position="1"/>
        <end position="34"/>
    </location>
</feature>
<feature type="compositionally biased region" description="Basic and acidic residues" evidence="3">
    <location>
        <begin position="16"/>
        <end position="34"/>
    </location>
</feature>
<keyword id="KW-0378">Hydrolase</keyword>
<proteinExistence type="inferred from homology"/>
<name>DGTL1_CAUSK</name>
<reference key="1">
    <citation type="submission" date="2008-01" db="EMBL/GenBank/DDBJ databases">
        <title>Complete sequence of chromosome of Caulobacter sp. K31.</title>
        <authorList>
            <consortium name="US DOE Joint Genome Institute"/>
            <person name="Copeland A."/>
            <person name="Lucas S."/>
            <person name="Lapidus A."/>
            <person name="Barry K."/>
            <person name="Glavina del Rio T."/>
            <person name="Dalin E."/>
            <person name="Tice H."/>
            <person name="Pitluck S."/>
            <person name="Bruce D."/>
            <person name="Goodwin L."/>
            <person name="Thompson L.S."/>
            <person name="Brettin T."/>
            <person name="Detter J.C."/>
            <person name="Han C."/>
            <person name="Schmutz J."/>
            <person name="Larimer F."/>
            <person name="Land M."/>
            <person name="Hauser L."/>
            <person name="Kyrpides N."/>
            <person name="Kim E."/>
            <person name="Stephens C."/>
            <person name="Richardson P."/>
        </authorList>
    </citation>
    <scope>NUCLEOTIDE SEQUENCE [LARGE SCALE GENOMIC DNA]</scope>
    <source>
        <strain>K31</strain>
    </source>
</reference>
<dbReference type="EMBL" id="CP000927">
    <property type="protein sequence ID" value="ABZ72251.1"/>
    <property type="molecule type" value="Genomic_DNA"/>
</dbReference>
<dbReference type="SMR" id="B0T1R2"/>
<dbReference type="STRING" id="366602.Caul_3124"/>
<dbReference type="KEGG" id="cak:Caul_3124"/>
<dbReference type="eggNOG" id="COG0232">
    <property type="taxonomic scope" value="Bacteria"/>
</dbReference>
<dbReference type="HOGENOM" id="CLU_028163_1_0_5"/>
<dbReference type="OrthoDB" id="9803619at2"/>
<dbReference type="GO" id="GO:0008832">
    <property type="term" value="F:dGTPase activity"/>
    <property type="evidence" value="ECO:0007669"/>
    <property type="project" value="TreeGrafter"/>
</dbReference>
<dbReference type="GO" id="GO:0006203">
    <property type="term" value="P:dGTP catabolic process"/>
    <property type="evidence" value="ECO:0007669"/>
    <property type="project" value="TreeGrafter"/>
</dbReference>
<dbReference type="CDD" id="cd00077">
    <property type="entry name" value="HDc"/>
    <property type="match status" value="1"/>
</dbReference>
<dbReference type="Gene3D" id="1.10.3210.10">
    <property type="entry name" value="Hypothetical protein af1432"/>
    <property type="match status" value="1"/>
</dbReference>
<dbReference type="HAMAP" id="MF_01212">
    <property type="entry name" value="dGTPase_type2"/>
    <property type="match status" value="1"/>
</dbReference>
<dbReference type="InterPro" id="IPR006261">
    <property type="entry name" value="dGTPase"/>
</dbReference>
<dbReference type="InterPro" id="IPR050135">
    <property type="entry name" value="dGTPase-like"/>
</dbReference>
<dbReference type="InterPro" id="IPR023023">
    <property type="entry name" value="dNTPase_2"/>
</dbReference>
<dbReference type="InterPro" id="IPR003607">
    <property type="entry name" value="HD/PDEase_dom"/>
</dbReference>
<dbReference type="InterPro" id="IPR006674">
    <property type="entry name" value="HD_domain"/>
</dbReference>
<dbReference type="InterPro" id="IPR006675">
    <property type="entry name" value="HDIG_dom"/>
</dbReference>
<dbReference type="InterPro" id="IPR026875">
    <property type="entry name" value="PHydrolase_assoc_dom"/>
</dbReference>
<dbReference type="NCBIfam" id="TIGR01353">
    <property type="entry name" value="dGTP_triPase"/>
    <property type="match status" value="1"/>
</dbReference>
<dbReference type="NCBIfam" id="TIGR00277">
    <property type="entry name" value="HDIG"/>
    <property type="match status" value="1"/>
</dbReference>
<dbReference type="NCBIfam" id="NF002326">
    <property type="entry name" value="PRK01286.1-1"/>
    <property type="match status" value="1"/>
</dbReference>
<dbReference type="NCBIfam" id="NF002328">
    <property type="entry name" value="PRK01286.1-3"/>
    <property type="match status" value="1"/>
</dbReference>
<dbReference type="PANTHER" id="PTHR11373:SF43">
    <property type="entry name" value="DEOXYGUANOSINETRIPHOSPHATE TRIPHOSPHOHYDROLASE-LIKE PROTEIN"/>
    <property type="match status" value="1"/>
</dbReference>
<dbReference type="PANTHER" id="PTHR11373">
    <property type="entry name" value="DEOXYNUCLEOSIDE TRIPHOSPHATE TRIPHOSPHOHYDROLASE"/>
    <property type="match status" value="1"/>
</dbReference>
<dbReference type="Pfam" id="PF01966">
    <property type="entry name" value="HD"/>
    <property type="match status" value="1"/>
</dbReference>
<dbReference type="Pfam" id="PF13286">
    <property type="entry name" value="HD_assoc"/>
    <property type="match status" value="1"/>
</dbReference>
<dbReference type="SMART" id="SM00471">
    <property type="entry name" value="HDc"/>
    <property type="match status" value="1"/>
</dbReference>
<dbReference type="SUPFAM" id="SSF109604">
    <property type="entry name" value="HD-domain/PDEase-like"/>
    <property type="match status" value="1"/>
</dbReference>
<dbReference type="PROSITE" id="PS51831">
    <property type="entry name" value="HD"/>
    <property type="match status" value="1"/>
</dbReference>